<feature type="chain" id="PRO_1000062855" description="Transcriptional regulator MraZ">
    <location>
        <begin position="1"/>
        <end position="142"/>
    </location>
</feature>
<feature type="domain" description="SpoVT-AbrB 1" evidence="2">
    <location>
        <begin position="5"/>
        <end position="51"/>
    </location>
</feature>
<feature type="domain" description="SpoVT-AbrB 2" evidence="2">
    <location>
        <begin position="77"/>
        <end position="120"/>
    </location>
</feature>
<evidence type="ECO:0000255" key="1">
    <source>
        <dbReference type="HAMAP-Rule" id="MF_01008"/>
    </source>
</evidence>
<evidence type="ECO:0000255" key="2">
    <source>
        <dbReference type="PROSITE-ProRule" id="PRU01076"/>
    </source>
</evidence>
<gene>
    <name evidence="1" type="primary">mraZ</name>
    <name type="ordered locus">BMASAVP1_A0481</name>
</gene>
<accession>A1V0S7</accession>
<organism>
    <name type="scientific">Burkholderia mallei (strain SAVP1)</name>
    <dbReference type="NCBI Taxonomy" id="320388"/>
    <lineage>
        <taxon>Bacteria</taxon>
        <taxon>Pseudomonadati</taxon>
        <taxon>Pseudomonadota</taxon>
        <taxon>Betaproteobacteria</taxon>
        <taxon>Burkholderiales</taxon>
        <taxon>Burkholderiaceae</taxon>
        <taxon>Burkholderia</taxon>
        <taxon>pseudomallei group</taxon>
    </lineage>
</organism>
<name>MRAZ_BURMS</name>
<sequence>MFQGASALTLDAKGRMSVPSRYREALQGQAEGRVTVTKHPDGCLLLFPRPEWEVFRAKIAALPMDAHWWRRIFLGNAMDVDLDSAGRILVSPELRMAAGLEKEVMLLGMGSHFELWDAQTYTAKEQAAMAQGMPEALKNFTF</sequence>
<comment type="subunit">
    <text evidence="1">Forms oligomers.</text>
</comment>
<comment type="subcellular location">
    <subcellularLocation>
        <location evidence="1">Cytoplasm</location>
        <location evidence="1">Nucleoid</location>
    </subcellularLocation>
</comment>
<comment type="similarity">
    <text evidence="1">Belongs to the MraZ family.</text>
</comment>
<reference key="1">
    <citation type="journal article" date="2010" name="Genome Biol. Evol.">
        <title>Continuing evolution of Burkholderia mallei through genome reduction and large-scale rearrangements.</title>
        <authorList>
            <person name="Losada L."/>
            <person name="Ronning C.M."/>
            <person name="DeShazer D."/>
            <person name="Woods D."/>
            <person name="Fedorova N."/>
            <person name="Kim H.S."/>
            <person name="Shabalina S.A."/>
            <person name="Pearson T.R."/>
            <person name="Brinkac L."/>
            <person name="Tan P."/>
            <person name="Nandi T."/>
            <person name="Crabtree J."/>
            <person name="Badger J."/>
            <person name="Beckstrom-Sternberg S."/>
            <person name="Saqib M."/>
            <person name="Schutzer S.E."/>
            <person name="Keim P."/>
            <person name="Nierman W.C."/>
        </authorList>
    </citation>
    <scope>NUCLEOTIDE SEQUENCE [LARGE SCALE GENOMIC DNA]</scope>
    <source>
        <strain>SAVP1</strain>
    </source>
</reference>
<keyword id="KW-0963">Cytoplasm</keyword>
<keyword id="KW-0238">DNA-binding</keyword>
<keyword id="KW-0677">Repeat</keyword>
<keyword id="KW-0804">Transcription</keyword>
<keyword id="KW-0805">Transcription regulation</keyword>
<dbReference type="EMBL" id="CP000526">
    <property type="protein sequence ID" value="ABM50339.1"/>
    <property type="molecule type" value="Genomic_DNA"/>
</dbReference>
<dbReference type="RefSeq" id="WP_004194130.1">
    <property type="nucleotide sequence ID" value="NC_008785.1"/>
</dbReference>
<dbReference type="SMR" id="A1V0S7"/>
<dbReference type="GeneID" id="93061636"/>
<dbReference type="KEGG" id="bmv:BMASAVP1_A0481"/>
<dbReference type="HOGENOM" id="CLU_107907_2_1_4"/>
<dbReference type="GO" id="GO:0005737">
    <property type="term" value="C:cytoplasm"/>
    <property type="evidence" value="ECO:0007669"/>
    <property type="project" value="UniProtKB-UniRule"/>
</dbReference>
<dbReference type="GO" id="GO:0009295">
    <property type="term" value="C:nucleoid"/>
    <property type="evidence" value="ECO:0007669"/>
    <property type="project" value="UniProtKB-SubCell"/>
</dbReference>
<dbReference type="GO" id="GO:0003700">
    <property type="term" value="F:DNA-binding transcription factor activity"/>
    <property type="evidence" value="ECO:0007669"/>
    <property type="project" value="UniProtKB-UniRule"/>
</dbReference>
<dbReference type="GO" id="GO:0000976">
    <property type="term" value="F:transcription cis-regulatory region binding"/>
    <property type="evidence" value="ECO:0007669"/>
    <property type="project" value="TreeGrafter"/>
</dbReference>
<dbReference type="GO" id="GO:2000143">
    <property type="term" value="P:negative regulation of DNA-templated transcription initiation"/>
    <property type="evidence" value="ECO:0007669"/>
    <property type="project" value="TreeGrafter"/>
</dbReference>
<dbReference type="CDD" id="cd16321">
    <property type="entry name" value="MraZ_C"/>
    <property type="match status" value="1"/>
</dbReference>
<dbReference type="CDD" id="cd16320">
    <property type="entry name" value="MraZ_N"/>
    <property type="match status" value="1"/>
</dbReference>
<dbReference type="Gene3D" id="3.40.1550.20">
    <property type="entry name" value="Transcriptional regulator MraZ domain"/>
    <property type="match status" value="1"/>
</dbReference>
<dbReference type="HAMAP" id="MF_01008">
    <property type="entry name" value="MraZ"/>
    <property type="match status" value="1"/>
</dbReference>
<dbReference type="InterPro" id="IPR003444">
    <property type="entry name" value="MraZ"/>
</dbReference>
<dbReference type="InterPro" id="IPR035644">
    <property type="entry name" value="MraZ_C"/>
</dbReference>
<dbReference type="InterPro" id="IPR020603">
    <property type="entry name" value="MraZ_dom"/>
</dbReference>
<dbReference type="InterPro" id="IPR035642">
    <property type="entry name" value="MraZ_N"/>
</dbReference>
<dbReference type="InterPro" id="IPR038619">
    <property type="entry name" value="MraZ_sf"/>
</dbReference>
<dbReference type="InterPro" id="IPR007159">
    <property type="entry name" value="SpoVT-AbrB_dom"/>
</dbReference>
<dbReference type="InterPro" id="IPR037914">
    <property type="entry name" value="SpoVT-AbrB_sf"/>
</dbReference>
<dbReference type="NCBIfam" id="TIGR00242">
    <property type="entry name" value="division/cell wall cluster transcriptional repressor MraZ"/>
    <property type="match status" value="1"/>
</dbReference>
<dbReference type="PANTHER" id="PTHR34701">
    <property type="entry name" value="TRANSCRIPTIONAL REGULATOR MRAZ"/>
    <property type="match status" value="1"/>
</dbReference>
<dbReference type="PANTHER" id="PTHR34701:SF1">
    <property type="entry name" value="TRANSCRIPTIONAL REGULATOR MRAZ"/>
    <property type="match status" value="1"/>
</dbReference>
<dbReference type="Pfam" id="PF02381">
    <property type="entry name" value="MraZ"/>
    <property type="match status" value="2"/>
</dbReference>
<dbReference type="SUPFAM" id="SSF89447">
    <property type="entry name" value="AbrB/MazE/MraZ-like"/>
    <property type="match status" value="1"/>
</dbReference>
<dbReference type="PROSITE" id="PS51740">
    <property type="entry name" value="SPOVT_ABRB"/>
    <property type="match status" value="2"/>
</dbReference>
<proteinExistence type="inferred from homology"/>
<protein>
    <recommendedName>
        <fullName>Transcriptional regulator MraZ</fullName>
    </recommendedName>
</protein>